<gene>
    <name evidence="2" type="primary">imqA</name>
    <name type="ORF">AFLA_064230</name>
</gene>
<comment type="function">
    <text evidence="1">Part of the gene cluster that mediates the biosynthesis of imizoquins A to D, tripeptide-derived alkaloids that serve a protective role against oxidative stress that are essential for normal germination (PubMed:29182847). ImqB is a canonical three-module NRPS that assembles the tripeptide backbone of the imizoquins via condensation of Trp, Tyr, and Leu-derived precursors (PubMed:29182847). N-methylation by imqF and phenol oxidation by imqC, followed by cyclization via the FAD-dependent oxidase imqH carry out the three-step transformation of L-tyrosine into tetrahydroisoquinoline (PubMed:29182847). Importantly, this sequence requires the presence of a free amine in the tyrosine moiety, indicating that isoquinoline formation occurs prior to peptide bond formation (PubMed:29182847). The imidazolidin-4-one ring of imizoquins could form following additional oxidation of the methyl-derived bridgehead carbon by imqH (PubMed:29182847). Lastly, O-methylation by imqG and leucine hydroxylation by imqE complete biosynthesis of the imizoquins (PubMed:29182847).</text>
</comment>
<comment type="pathway">
    <text evidence="3">Secondary metabolite biosynthesis.</text>
</comment>
<comment type="induction">
    <text evidence="1">Expression is down-regulated by ralstonins, lipopeptides produced by the plant pathogenic bacteria Ralstonia solanacearum (PubMed:29182847). Expression is positively regulated by the imizoquins cluster-specific transcription regulator imqK (PubMed:29182847).</text>
</comment>
<accession>B8NI18</accession>
<organism>
    <name type="scientific">Aspergillus flavus (strain ATCC 200026 / FGSC A1120 / IAM 13836 / NRRL 3357 / JCM 12722 / SRRC 167)</name>
    <dbReference type="NCBI Taxonomy" id="332952"/>
    <lineage>
        <taxon>Eukaryota</taxon>
        <taxon>Fungi</taxon>
        <taxon>Dikarya</taxon>
        <taxon>Ascomycota</taxon>
        <taxon>Pezizomycotina</taxon>
        <taxon>Eurotiomycetes</taxon>
        <taxon>Eurotiomycetidae</taxon>
        <taxon>Eurotiales</taxon>
        <taxon>Aspergillaceae</taxon>
        <taxon>Aspergillus</taxon>
        <taxon>Aspergillus subgen. Circumdati</taxon>
    </lineage>
</organism>
<sequence length="99" mass="11054">MVDSVFPAPSLVDETFLAPSSSETNDTAMAADGTLAKMNMFQFNSMLKEYSPPRFEDLFQDLDASKAGWEHYRPRLVSEVDLIDAEHYSLFSANTVSPL</sequence>
<protein>
    <recommendedName>
        <fullName evidence="2">Imizoquin biosynthesis cluster protein A</fullName>
    </recommendedName>
</protein>
<name>IMQA_ASPFN</name>
<reference key="1">
    <citation type="journal article" date="2015" name="Genome Announc.">
        <title>Genome sequence of Aspergillus flavus NRRL 3357, a strain that causes aflatoxin contamination of food and feed.</title>
        <authorList>
            <person name="Nierman W.C."/>
            <person name="Yu J."/>
            <person name="Fedorova-Abrams N.D."/>
            <person name="Losada L."/>
            <person name="Cleveland T.E."/>
            <person name="Bhatnagar D."/>
            <person name="Bennett J.W."/>
            <person name="Dean R."/>
            <person name="Payne G.A."/>
        </authorList>
    </citation>
    <scope>NUCLEOTIDE SEQUENCE [LARGE SCALE GENOMIC DNA]</scope>
    <source>
        <strain>ATCC 200026 / FGSC A1120 / IAM 13836 / NRRL 3357 / JCM 12722 / SRRC 167</strain>
    </source>
</reference>
<reference key="2">
    <citation type="journal article" date="2018" name="ACS Chem. Biol.">
        <title>NRPS-derived isoquinolines and lipopetides mediate antagonism between plant pathogenic fungi and bacteria.</title>
        <authorList>
            <person name="Khalid S."/>
            <person name="Baccile J.A."/>
            <person name="Spraker J.E."/>
            <person name="Tannous J."/>
            <person name="Imran M."/>
            <person name="Schroeder F.C."/>
            <person name="Keller N.P."/>
        </authorList>
    </citation>
    <scope>INDUCTION</scope>
    <scope>FUNCTION</scope>
    <scope>PATHWAY</scope>
</reference>
<evidence type="ECO:0000269" key="1">
    <source>
    </source>
</evidence>
<evidence type="ECO:0000303" key="2">
    <source>
    </source>
</evidence>
<evidence type="ECO:0000305" key="3">
    <source>
    </source>
</evidence>
<dbReference type="EMBL" id="EQ963479">
    <property type="protein sequence ID" value="EED49602.1"/>
    <property type="molecule type" value="Genomic_DNA"/>
</dbReference>
<dbReference type="RefSeq" id="XP_002379983.1">
    <property type="nucleotide sequence ID" value="XM_002379942.1"/>
</dbReference>
<dbReference type="STRING" id="332952.B8NI18"/>
<dbReference type="EnsemblFungi" id="EED49602">
    <property type="protein sequence ID" value="EED49602"/>
    <property type="gene ID" value="AFLA_064230"/>
</dbReference>
<dbReference type="VEuPathDB" id="FungiDB:AFLA_008358"/>
<dbReference type="HOGENOM" id="CLU_2319899_0_0_1"/>
<proteinExistence type="evidence at transcript level"/>
<feature type="chain" id="PRO_0000444545" description="Imizoquin biosynthesis cluster protein A">
    <location>
        <begin position="1"/>
        <end position="99"/>
    </location>
</feature>